<gene>
    <name evidence="1" type="primary">rpmI</name>
    <name type="ordered locus">MW1623</name>
</gene>
<sequence length="66" mass="7697">MPKMKTHRGAAKRVKRTASGQLKRSRAFTSHLFANKSTKQKRQLRKARLVSKSDMKRVKQLLAYKK</sequence>
<reference key="1">
    <citation type="journal article" date="2002" name="Lancet">
        <title>Genome and virulence determinants of high virulence community-acquired MRSA.</title>
        <authorList>
            <person name="Baba T."/>
            <person name="Takeuchi F."/>
            <person name="Kuroda M."/>
            <person name="Yuzawa H."/>
            <person name="Aoki K."/>
            <person name="Oguchi A."/>
            <person name="Nagai Y."/>
            <person name="Iwama N."/>
            <person name="Asano K."/>
            <person name="Naimi T."/>
            <person name="Kuroda H."/>
            <person name="Cui L."/>
            <person name="Yamamoto K."/>
            <person name="Hiramatsu K."/>
        </authorList>
    </citation>
    <scope>NUCLEOTIDE SEQUENCE [LARGE SCALE GENOMIC DNA]</scope>
    <source>
        <strain>MW2</strain>
    </source>
</reference>
<accession>P66277</accession>
<accession>Q99TI2</accession>
<organism>
    <name type="scientific">Staphylococcus aureus (strain MW2)</name>
    <dbReference type="NCBI Taxonomy" id="196620"/>
    <lineage>
        <taxon>Bacteria</taxon>
        <taxon>Bacillati</taxon>
        <taxon>Bacillota</taxon>
        <taxon>Bacilli</taxon>
        <taxon>Bacillales</taxon>
        <taxon>Staphylococcaceae</taxon>
        <taxon>Staphylococcus</taxon>
    </lineage>
</organism>
<evidence type="ECO:0000255" key="1">
    <source>
        <dbReference type="HAMAP-Rule" id="MF_00514"/>
    </source>
</evidence>
<evidence type="ECO:0000256" key="2">
    <source>
        <dbReference type="SAM" id="MobiDB-lite"/>
    </source>
</evidence>
<evidence type="ECO:0000305" key="3"/>
<dbReference type="EMBL" id="BA000033">
    <property type="protein sequence ID" value="BAB95488.1"/>
    <property type="molecule type" value="Genomic_DNA"/>
</dbReference>
<dbReference type="RefSeq" id="WP_001125540.1">
    <property type="nucleotide sequence ID" value="NC_003923.1"/>
</dbReference>
<dbReference type="PDB" id="8Y36">
    <property type="method" value="EM"/>
    <property type="resolution" value="2.65 A"/>
    <property type="chains" value="3=2-65"/>
</dbReference>
<dbReference type="PDB" id="8Y37">
    <property type="method" value="EM"/>
    <property type="resolution" value="2.53 A"/>
    <property type="chains" value="3=2-65"/>
</dbReference>
<dbReference type="PDB" id="8Y38">
    <property type="method" value="EM"/>
    <property type="resolution" value="2.58 A"/>
    <property type="chains" value="3=2-65"/>
</dbReference>
<dbReference type="PDB" id="8Y39">
    <property type="method" value="EM"/>
    <property type="resolution" value="3.60 A"/>
    <property type="chains" value="3=2-65"/>
</dbReference>
<dbReference type="PDBsum" id="8Y36"/>
<dbReference type="PDBsum" id="8Y37"/>
<dbReference type="PDBsum" id="8Y38"/>
<dbReference type="PDBsum" id="8Y39"/>
<dbReference type="EMDB" id="EMD-38873"/>
<dbReference type="EMDB" id="EMD-38874"/>
<dbReference type="EMDB" id="EMD-38875"/>
<dbReference type="EMDB" id="EMD-38876"/>
<dbReference type="SMR" id="P66277"/>
<dbReference type="GeneID" id="98346041"/>
<dbReference type="KEGG" id="sam:MW1623"/>
<dbReference type="HOGENOM" id="CLU_169643_3_0_9"/>
<dbReference type="GO" id="GO:0022625">
    <property type="term" value="C:cytosolic large ribosomal subunit"/>
    <property type="evidence" value="ECO:0007669"/>
    <property type="project" value="TreeGrafter"/>
</dbReference>
<dbReference type="GO" id="GO:0003735">
    <property type="term" value="F:structural constituent of ribosome"/>
    <property type="evidence" value="ECO:0007669"/>
    <property type="project" value="InterPro"/>
</dbReference>
<dbReference type="GO" id="GO:0006412">
    <property type="term" value="P:translation"/>
    <property type="evidence" value="ECO:0007669"/>
    <property type="project" value="UniProtKB-UniRule"/>
</dbReference>
<dbReference type="FunFam" id="4.10.410.60:FF:000001">
    <property type="entry name" value="50S ribosomal protein L35"/>
    <property type="match status" value="1"/>
</dbReference>
<dbReference type="Gene3D" id="4.10.410.60">
    <property type="match status" value="1"/>
</dbReference>
<dbReference type="HAMAP" id="MF_00514">
    <property type="entry name" value="Ribosomal_bL35"/>
    <property type="match status" value="1"/>
</dbReference>
<dbReference type="InterPro" id="IPR001706">
    <property type="entry name" value="Ribosomal_bL35"/>
</dbReference>
<dbReference type="InterPro" id="IPR021137">
    <property type="entry name" value="Ribosomal_bL35-like"/>
</dbReference>
<dbReference type="InterPro" id="IPR018265">
    <property type="entry name" value="Ribosomal_bL35_CS"/>
</dbReference>
<dbReference type="InterPro" id="IPR037229">
    <property type="entry name" value="Ribosomal_bL35_sf"/>
</dbReference>
<dbReference type="NCBIfam" id="TIGR00001">
    <property type="entry name" value="rpmI_bact"/>
    <property type="match status" value="1"/>
</dbReference>
<dbReference type="PANTHER" id="PTHR33343">
    <property type="entry name" value="54S RIBOSOMAL PROTEIN BL35M"/>
    <property type="match status" value="1"/>
</dbReference>
<dbReference type="PANTHER" id="PTHR33343:SF1">
    <property type="entry name" value="LARGE RIBOSOMAL SUBUNIT PROTEIN BL35M"/>
    <property type="match status" value="1"/>
</dbReference>
<dbReference type="Pfam" id="PF01632">
    <property type="entry name" value="Ribosomal_L35p"/>
    <property type="match status" value="1"/>
</dbReference>
<dbReference type="PRINTS" id="PR00064">
    <property type="entry name" value="RIBOSOMALL35"/>
</dbReference>
<dbReference type="SUPFAM" id="SSF143034">
    <property type="entry name" value="L35p-like"/>
    <property type="match status" value="1"/>
</dbReference>
<dbReference type="PROSITE" id="PS00936">
    <property type="entry name" value="RIBOSOMAL_L35"/>
    <property type="match status" value="1"/>
</dbReference>
<keyword id="KW-0002">3D-structure</keyword>
<keyword id="KW-0687">Ribonucleoprotein</keyword>
<keyword id="KW-0689">Ribosomal protein</keyword>
<proteinExistence type="evidence at protein level"/>
<comment type="similarity">
    <text evidence="1">Belongs to the bacterial ribosomal protein bL35 family.</text>
</comment>
<protein>
    <recommendedName>
        <fullName evidence="1">Large ribosomal subunit protein bL35</fullName>
    </recommendedName>
    <alternativeName>
        <fullName evidence="3">50S ribosomal protein L35</fullName>
    </alternativeName>
</protein>
<name>RL35_STAAW</name>
<feature type="chain" id="PRO_0000177422" description="Large ribosomal subunit protein bL35">
    <location>
        <begin position="1"/>
        <end position="66"/>
    </location>
</feature>
<feature type="region of interest" description="Disordered" evidence="2">
    <location>
        <begin position="1"/>
        <end position="49"/>
    </location>
</feature>
<feature type="compositionally biased region" description="Basic residues" evidence="2">
    <location>
        <begin position="1"/>
        <end position="16"/>
    </location>
</feature>
<feature type="compositionally biased region" description="Basic residues" evidence="2">
    <location>
        <begin position="38"/>
        <end position="49"/>
    </location>
</feature>